<comment type="catalytic activity">
    <reaction evidence="1">
        <text>tRNA(Cys) + L-cysteine + ATP = L-cysteinyl-tRNA(Cys) + AMP + diphosphate</text>
        <dbReference type="Rhea" id="RHEA:17773"/>
        <dbReference type="Rhea" id="RHEA-COMP:9661"/>
        <dbReference type="Rhea" id="RHEA-COMP:9679"/>
        <dbReference type="ChEBI" id="CHEBI:30616"/>
        <dbReference type="ChEBI" id="CHEBI:33019"/>
        <dbReference type="ChEBI" id="CHEBI:35235"/>
        <dbReference type="ChEBI" id="CHEBI:78442"/>
        <dbReference type="ChEBI" id="CHEBI:78517"/>
        <dbReference type="ChEBI" id="CHEBI:456215"/>
        <dbReference type="EC" id="6.1.1.16"/>
    </reaction>
</comment>
<comment type="cofactor">
    <cofactor evidence="1">
        <name>Zn(2+)</name>
        <dbReference type="ChEBI" id="CHEBI:29105"/>
    </cofactor>
    <text evidence="1">Binds 1 zinc ion per subunit.</text>
</comment>
<comment type="subunit">
    <text evidence="1">Monomer.</text>
</comment>
<comment type="subcellular location">
    <subcellularLocation>
        <location evidence="1">Cytoplasm</location>
    </subcellularLocation>
</comment>
<comment type="similarity">
    <text evidence="1">Belongs to the class-I aminoacyl-tRNA synthetase family.</text>
</comment>
<feature type="chain" id="PRO_1000199088" description="Cysteine--tRNA ligase">
    <location>
        <begin position="1"/>
        <end position="469"/>
    </location>
</feature>
<feature type="short sequence motif" description="'HIGH' region">
    <location>
        <begin position="31"/>
        <end position="41"/>
    </location>
</feature>
<feature type="short sequence motif" description="'KMSKS' region">
    <location>
        <begin position="267"/>
        <end position="271"/>
    </location>
</feature>
<feature type="binding site" evidence="1">
    <location>
        <position position="29"/>
    </location>
    <ligand>
        <name>Zn(2+)</name>
        <dbReference type="ChEBI" id="CHEBI:29105"/>
    </ligand>
</feature>
<feature type="binding site" evidence="1">
    <location>
        <position position="210"/>
    </location>
    <ligand>
        <name>Zn(2+)</name>
        <dbReference type="ChEBI" id="CHEBI:29105"/>
    </ligand>
</feature>
<feature type="binding site" evidence="1">
    <location>
        <position position="235"/>
    </location>
    <ligand>
        <name>Zn(2+)</name>
        <dbReference type="ChEBI" id="CHEBI:29105"/>
    </ligand>
</feature>
<feature type="binding site" evidence="1">
    <location>
        <position position="239"/>
    </location>
    <ligand>
        <name>Zn(2+)</name>
        <dbReference type="ChEBI" id="CHEBI:29105"/>
    </ligand>
</feature>
<feature type="binding site" evidence="1">
    <location>
        <position position="270"/>
    </location>
    <ligand>
        <name>ATP</name>
        <dbReference type="ChEBI" id="CHEBI:30616"/>
    </ligand>
</feature>
<keyword id="KW-0030">Aminoacyl-tRNA synthetase</keyword>
<keyword id="KW-0067">ATP-binding</keyword>
<keyword id="KW-0963">Cytoplasm</keyword>
<keyword id="KW-0436">Ligase</keyword>
<keyword id="KW-0479">Metal-binding</keyword>
<keyword id="KW-0547">Nucleotide-binding</keyword>
<keyword id="KW-0648">Protein biosynthesis</keyword>
<keyword id="KW-1185">Reference proteome</keyword>
<keyword id="KW-0862">Zinc</keyword>
<organism>
    <name type="scientific">Thermosipho africanus (strain TCF52B)</name>
    <dbReference type="NCBI Taxonomy" id="484019"/>
    <lineage>
        <taxon>Bacteria</taxon>
        <taxon>Thermotogati</taxon>
        <taxon>Thermotogota</taxon>
        <taxon>Thermotogae</taxon>
        <taxon>Thermotogales</taxon>
        <taxon>Fervidobacteriaceae</taxon>
        <taxon>Thermosipho</taxon>
    </lineage>
</organism>
<protein>
    <recommendedName>
        <fullName evidence="1">Cysteine--tRNA ligase</fullName>
        <ecNumber evidence="1">6.1.1.16</ecNumber>
    </recommendedName>
    <alternativeName>
        <fullName evidence="1">Cysteinyl-tRNA synthetase</fullName>
        <shortName evidence="1">CysRS</shortName>
    </alternativeName>
</protein>
<dbReference type="EC" id="6.1.1.16" evidence="1"/>
<dbReference type="EMBL" id="CP001185">
    <property type="protein sequence ID" value="ACJ74781.1"/>
    <property type="molecule type" value="Genomic_DNA"/>
</dbReference>
<dbReference type="RefSeq" id="WP_012579467.1">
    <property type="nucleotide sequence ID" value="NC_011653.1"/>
</dbReference>
<dbReference type="SMR" id="B7IFB7"/>
<dbReference type="STRING" id="484019.THA_281"/>
<dbReference type="KEGG" id="taf:THA_281"/>
<dbReference type="eggNOG" id="COG0215">
    <property type="taxonomic scope" value="Bacteria"/>
</dbReference>
<dbReference type="HOGENOM" id="CLU_013528_0_1_0"/>
<dbReference type="OrthoDB" id="9815130at2"/>
<dbReference type="Proteomes" id="UP000002453">
    <property type="component" value="Chromosome"/>
</dbReference>
<dbReference type="GO" id="GO:0005829">
    <property type="term" value="C:cytosol"/>
    <property type="evidence" value="ECO:0007669"/>
    <property type="project" value="TreeGrafter"/>
</dbReference>
<dbReference type="GO" id="GO:0005524">
    <property type="term" value="F:ATP binding"/>
    <property type="evidence" value="ECO:0007669"/>
    <property type="project" value="UniProtKB-UniRule"/>
</dbReference>
<dbReference type="GO" id="GO:0004817">
    <property type="term" value="F:cysteine-tRNA ligase activity"/>
    <property type="evidence" value="ECO:0007669"/>
    <property type="project" value="UniProtKB-UniRule"/>
</dbReference>
<dbReference type="GO" id="GO:0008270">
    <property type="term" value="F:zinc ion binding"/>
    <property type="evidence" value="ECO:0007669"/>
    <property type="project" value="UniProtKB-UniRule"/>
</dbReference>
<dbReference type="GO" id="GO:0006423">
    <property type="term" value="P:cysteinyl-tRNA aminoacylation"/>
    <property type="evidence" value="ECO:0007669"/>
    <property type="project" value="UniProtKB-UniRule"/>
</dbReference>
<dbReference type="CDD" id="cd00672">
    <property type="entry name" value="CysRS_core"/>
    <property type="match status" value="1"/>
</dbReference>
<dbReference type="FunFam" id="3.40.50.620:FF:000009">
    <property type="entry name" value="Cysteine--tRNA ligase"/>
    <property type="match status" value="1"/>
</dbReference>
<dbReference type="Gene3D" id="1.20.120.1910">
    <property type="entry name" value="Cysteine-tRNA ligase, C-terminal anti-codon recognition domain"/>
    <property type="match status" value="1"/>
</dbReference>
<dbReference type="Gene3D" id="3.40.50.620">
    <property type="entry name" value="HUPs"/>
    <property type="match status" value="1"/>
</dbReference>
<dbReference type="HAMAP" id="MF_00041">
    <property type="entry name" value="Cys_tRNA_synth"/>
    <property type="match status" value="1"/>
</dbReference>
<dbReference type="InterPro" id="IPR015803">
    <property type="entry name" value="Cys-tRNA-ligase"/>
</dbReference>
<dbReference type="InterPro" id="IPR015273">
    <property type="entry name" value="Cys-tRNA-synt_Ia_DALR"/>
</dbReference>
<dbReference type="InterPro" id="IPR024909">
    <property type="entry name" value="Cys-tRNA/MSH_ligase"/>
</dbReference>
<dbReference type="InterPro" id="IPR014729">
    <property type="entry name" value="Rossmann-like_a/b/a_fold"/>
</dbReference>
<dbReference type="InterPro" id="IPR032678">
    <property type="entry name" value="tRNA-synt_1_cat_dom"/>
</dbReference>
<dbReference type="InterPro" id="IPR009080">
    <property type="entry name" value="tRNAsynth_Ia_anticodon-bd"/>
</dbReference>
<dbReference type="NCBIfam" id="TIGR00435">
    <property type="entry name" value="cysS"/>
    <property type="match status" value="1"/>
</dbReference>
<dbReference type="PANTHER" id="PTHR10890:SF3">
    <property type="entry name" value="CYSTEINE--TRNA LIGASE, CYTOPLASMIC"/>
    <property type="match status" value="1"/>
</dbReference>
<dbReference type="PANTHER" id="PTHR10890">
    <property type="entry name" value="CYSTEINYL-TRNA SYNTHETASE"/>
    <property type="match status" value="1"/>
</dbReference>
<dbReference type="Pfam" id="PF09190">
    <property type="entry name" value="DALR_2"/>
    <property type="match status" value="1"/>
</dbReference>
<dbReference type="Pfam" id="PF01406">
    <property type="entry name" value="tRNA-synt_1e"/>
    <property type="match status" value="1"/>
</dbReference>
<dbReference type="PRINTS" id="PR00983">
    <property type="entry name" value="TRNASYNTHCYS"/>
</dbReference>
<dbReference type="SMART" id="SM00840">
    <property type="entry name" value="DALR_2"/>
    <property type="match status" value="1"/>
</dbReference>
<dbReference type="SUPFAM" id="SSF47323">
    <property type="entry name" value="Anticodon-binding domain of a subclass of class I aminoacyl-tRNA synthetases"/>
    <property type="match status" value="1"/>
</dbReference>
<dbReference type="SUPFAM" id="SSF52374">
    <property type="entry name" value="Nucleotidylyl transferase"/>
    <property type="match status" value="1"/>
</dbReference>
<evidence type="ECO:0000255" key="1">
    <source>
        <dbReference type="HAMAP-Rule" id="MF_00041"/>
    </source>
</evidence>
<proteinExistence type="inferred from homology"/>
<gene>
    <name evidence="1" type="primary">cysS</name>
    <name type="ordered locus">THA_281</name>
</gene>
<sequence>MAIYITNTETGKKEELKTIEPGVVKMYVCGPTVYNYIHIGNARPAVVFDAFRRFLEYRGYKVIMVQNFTDIDDKIINEANEWGVDFKDVADTFIAEYWKDAQSLGIRAANFHPRTTDYVNEIVDAVEKLISKGYAYTVENGDVYFSVKKFERYGKLSGKKIEDLISGARVEVNTLKKDPLDFALWKAVKPGEPSWDSPWGCGRPGWHIECSVMSQKLLGDTFDIHAGGEDLIFPHHEDEKSQSEALTGKPFARYWMHNGMIITRGDKMSKSIGNVFLVREAVKRYGKDAVKLFLLSKHYRTPIEFSDEIMMENKKAALKVLKTLNRFEEKYPYPKVPKRDEYMNDIEQKFVEALEDDFNTPKAIALIFDLSKELNKAMDEGKDDEALKRYHLITRVFGSILGLFEGGVKISEGENTNKVIEEILKVRQEFRKAKNFEAADKIRDALLNSNVKILDTPDGTKWEILEVEE</sequence>
<name>SYC_THEAB</name>
<accession>B7IFB7</accession>
<reference key="1">
    <citation type="journal article" date="2009" name="J. Bacteriol.">
        <title>The genome of Thermosipho africanus TCF52B: lateral genetic connections to the Firmicutes and Archaea.</title>
        <authorList>
            <person name="Nesboe C.L."/>
            <person name="Bapteste E."/>
            <person name="Curtis B."/>
            <person name="Dahle H."/>
            <person name="Lopez P."/>
            <person name="Macleod D."/>
            <person name="Dlutek M."/>
            <person name="Bowman S."/>
            <person name="Zhaxybayeva O."/>
            <person name="Birkeland N.-K."/>
            <person name="Doolittle W.F."/>
        </authorList>
    </citation>
    <scope>NUCLEOTIDE SEQUENCE [LARGE SCALE GENOMIC DNA]</scope>
    <source>
        <strain>TCF52B</strain>
    </source>
</reference>